<reference key="1">
    <citation type="journal article" date="2002" name="Environ. Microbiol.">
        <title>Complete genome sequence and comparative analysis of the metabolically versatile Pseudomonas putida KT2440.</title>
        <authorList>
            <person name="Nelson K.E."/>
            <person name="Weinel C."/>
            <person name="Paulsen I.T."/>
            <person name="Dodson R.J."/>
            <person name="Hilbert H."/>
            <person name="Martins dos Santos V.A.P."/>
            <person name="Fouts D.E."/>
            <person name="Gill S.R."/>
            <person name="Pop M."/>
            <person name="Holmes M."/>
            <person name="Brinkac L.M."/>
            <person name="Beanan M.J."/>
            <person name="DeBoy R.T."/>
            <person name="Daugherty S.C."/>
            <person name="Kolonay J.F."/>
            <person name="Madupu R."/>
            <person name="Nelson W.C."/>
            <person name="White O."/>
            <person name="Peterson J.D."/>
            <person name="Khouri H.M."/>
            <person name="Hance I."/>
            <person name="Chris Lee P."/>
            <person name="Holtzapple E.K."/>
            <person name="Scanlan D."/>
            <person name="Tran K."/>
            <person name="Moazzez A."/>
            <person name="Utterback T.R."/>
            <person name="Rizzo M."/>
            <person name="Lee K."/>
            <person name="Kosack D."/>
            <person name="Moestl D."/>
            <person name="Wedler H."/>
            <person name="Lauber J."/>
            <person name="Stjepandic D."/>
            <person name="Hoheisel J."/>
            <person name="Straetz M."/>
            <person name="Heim S."/>
            <person name="Kiewitz C."/>
            <person name="Eisen J.A."/>
            <person name="Timmis K.N."/>
            <person name="Duesterhoeft A."/>
            <person name="Tuemmler B."/>
            <person name="Fraser C.M."/>
        </authorList>
    </citation>
    <scope>NUCLEOTIDE SEQUENCE [LARGE SCALE GENOMIC DNA]</scope>
    <source>
        <strain>ATCC 47054 / DSM 6125 / CFBP 8728 / NCIMB 11950 / KT2440</strain>
    </source>
</reference>
<reference key="2">
    <citation type="journal article" date="2019" name="MBio">
        <title>Massively parallel fitness profiling reveals multiple novel enzymes in Pseudomonas putida lysine metabolism.</title>
        <authorList>
            <person name="Thompson M.G."/>
            <person name="Blake-Hedges J.M."/>
            <person name="Cruz-Morales P."/>
            <person name="Barajas J.F."/>
            <person name="Curran S.C."/>
            <person name="Eiben C.B."/>
            <person name="Harris N.C."/>
            <person name="Benites V.T."/>
            <person name="Gin J.W."/>
            <person name="Sharpless W.A."/>
            <person name="Twigg F.F."/>
            <person name="Skyrud W."/>
            <person name="Krishna R.N."/>
            <person name="Pereira J.H."/>
            <person name="Baidoo E.E.K."/>
            <person name="Petzold C.J."/>
            <person name="Adams P.D."/>
            <person name="Arkin A.P."/>
            <person name="Deutschbauer A.M."/>
            <person name="Keasling J.D."/>
        </authorList>
    </citation>
    <scope>FUNCTION</scope>
    <scope>CATALYTIC ACTIVITY</scope>
    <scope>PATHWAY</scope>
    <scope>INDUCTION</scope>
    <scope>DISRUPTION PHENOTYPE</scope>
    <source>
        <strain>ATCC 47054 / DSM 6125 / CFBP 8728 / NCIMB 11950 / KT2440</strain>
    </source>
</reference>
<comment type="function">
    <text evidence="1 2">Acts as an alpha-ketoglutarate-dependent dioxygenase catalyzing hydroxylation of glutarate (GA) to L-2-hydroxyglutarate (L2HG) (PubMed:31064836). Functions in a L-lysine degradation pathway that proceeds via cadaverine, glutarate and L-2-hydroxyglutarate (By similarity). Is extremely specific for glutarate, but it can use both 2-oxoglutarate and 2-oxoadipate (2OA) as a cosubstrate for L2HG formation (PubMed:31064836).</text>
</comment>
<comment type="catalytic activity">
    <reaction evidence="1 2">
        <text>glutarate + 2-oxoglutarate + O2 = (S)-2-hydroxyglutarate + succinate + CO2</text>
        <dbReference type="Rhea" id="RHEA:13821"/>
        <dbReference type="ChEBI" id="CHEBI:15379"/>
        <dbReference type="ChEBI" id="CHEBI:16526"/>
        <dbReference type="ChEBI" id="CHEBI:16782"/>
        <dbReference type="ChEBI" id="CHEBI:16810"/>
        <dbReference type="ChEBI" id="CHEBI:30031"/>
        <dbReference type="ChEBI" id="CHEBI:30921"/>
        <dbReference type="EC" id="1.14.11.64"/>
    </reaction>
    <physiologicalReaction direction="left-to-right" evidence="1 2">
        <dbReference type="Rhea" id="RHEA:13822"/>
    </physiologicalReaction>
</comment>
<comment type="cofactor">
    <cofactor evidence="1">
        <name>Fe(2+)</name>
        <dbReference type="ChEBI" id="CHEBI:29033"/>
    </cofactor>
    <text evidence="1">Binds 1 Fe(2+) ion per subunit.</text>
</comment>
<comment type="pathway">
    <text evidence="1 2">Amino-acid degradation.</text>
</comment>
<comment type="subunit">
    <text evidence="1">Homotetramer.</text>
</comment>
<comment type="induction">
    <text evidence="2">Induced when grown on glutarate, and also moderately up-regulated by 5-aminovalerate (5AVA) and L-lysine.</text>
</comment>
<comment type="disruption phenotype">
    <text evidence="2">Deletion mutant shows an increased lag time when grown on either L-lysine or 5-aminovalerate (5AVA).</text>
</comment>
<comment type="similarity">
    <text evidence="1">Belongs to the glutarate hydroxylase family.</text>
</comment>
<protein>
    <recommendedName>
        <fullName evidence="1">Glutarate 2-hydroxylase</fullName>
        <shortName evidence="1">G-2-H</shortName>
        <ecNumber evidence="1 2">1.14.11.64</ecNumber>
    </recommendedName>
</protein>
<evidence type="ECO:0000255" key="1">
    <source>
        <dbReference type="HAMAP-Rule" id="MF_01083"/>
    </source>
</evidence>
<evidence type="ECO:0000269" key="2">
    <source>
    </source>
</evidence>
<evidence type="ECO:0000303" key="3">
    <source>
    </source>
</evidence>
<organism>
    <name type="scientific">Pseudomonas putida (strain ATCC 47054 / DSM 6125 / CFBP 8728 / NCIMB 11950 / KT2440)</name>
    <dbReference type="NCBI Taxonomy" id="160488"/>
    <lineage>
        <taxon>Bacteria</taxon>
        <taxon>Pseudomonadati</taxon>
        <taxon>Pseudomonadota</taxon>
        <taxon>Gammaproteobacteria</taxon>
        <taxon>Pseudomonadales</taxon>
        <taxon>Pseudomonadaceae</taxon>
        <taxon>Pseudomonas</taxon>
    </lineage>
</organism>
<sequence length="325" mass="37177">MNAFTQIDELVMPLPLEPQGYTIAPSKQSPRLLELTFARETVEAFVQAVAQWPVQALEYKSFLRFRVGEILDELCQGTLRPVLLNTILDRATGGMLITPIGLDDVSQAEDMVKFTTACAHLIGRSNYDAMSGQFYARFVVVNSDNSDSYLRQPHRVMELHNDGTFVNQITDYVLMLKIDEKNMEGGNSLLLHLDDWEQCEAFFRHPLARREMRWTAPPSKKVAEDVFHSVFDTDAEGRPTMRYIDQFVQPENYEEGIWLNALSESLEGSGKKVSVPVGVGSFLLINNLFWLHGRDRFTPHEGLRRELMRQRGYVAFPKPLYQRGQ</sequence>
<keyword id="KW-0223">Dioxygenase</keyword>
<keyword id="KW-0408">Iron</keyword>
<keyword id="KW-0479">Metal-binding</keyword>
<keyword id="KW-0560">Oxidoreductase</keyword>
<keyword id="KW-1185">Reference proteome</keyword>
<name>GLAH_PSEPK</name>
<accession>Q88IU0</accession>
<proteinExistence type="evidence at protein level"/>
<gene>
    <name evidence="1" type="primary">glaH</name>
    <name evidence="3" type="synonym">csiD</name>
    <name type="ordered locus">PP_2909</name>
</gene>
<feature type="chain" id="PRO_0000218180" description="Glutarate 2-hydroxylase">
    <location>
        <begin position="1"/>
        <end position="325"/>
    </location>
</feature>
<feature type="binding site" evidence="1">
    <location>
        <position position="160"/>
    </location>
    <ligand>
        <name>Fe cation</name>
        <dbReference type="ChEBI" id="CHEBI:24875"/>
    </ligand>
</feature>
<feature type="binding site" evidence="1">
    <location>
        <position position="162"/>
    </location>
    <ligand>
        <name>Fe cation</name>
        <dbReference type="ChEBI" id="CHEBI:24875"/>
    </ligand>
</feature>
<feature type="binding site" evidence="1">
    <location>
        <position position="292"/>
    </location>
    <ligand>
        <name>Fe cation</name>
        <dbReference type="ChEBI" id="CHEBI:24875"/>
    </ligand>
</feature>
<dbReference type="EC" id="1.14.11.64" evidence="1 2"/>
<dbReference type="EMBL" id="AE015451">
    <property type="protein sequence ID" value="AAN68517.1"/>
    <property type="molecule type" value="Genomic_DNA"/>
</dbReference>
<dbReference type="RefSeq" id="NP_745053.1">
    <property type="nucleotide sequence ID" value="NC_002947.4"/>
</dbReference>
<dbReference type="RefSeq" id="WP_010953811.1">
    <property type="nucleotide sequence ID" value="NZ_CP169744.1"/>
</dbReference>
<dbReference type="SMR" id="Q88IU0"/>
<dbReference type="STRING" id="160488.PP_2909"/>
<dbReference type="PaxDb" id="160488-PP_2909"/>
<dbReference type="GeneID" id="83680508"/>
<dbReference type="KEGG" id="ppu:PP_2909"/>
<dbReference type="PATRIC" id="fig|160488.4.peg.3083"/>
<dbReference type="eggNOG" id="ENOG502Z8GB">
    <property type="taxonomic scope" value="Bacteria"/>
</dbReference>
<dbReference type="HOGENOM" id="CLU_075277_0_0_6"/>
<dbReference type="OrthoDB" id="8954293at2"/>
<dbReference type="PhylomeDB" id="Q88IU0"/>
<dbReference type="BioCyc" id="MetaCyc:G1G01-3088-MONOMER"/>
<dbReference type="BioCyc" id="PPUT160488:G1G01-3088-MONOMER"/>
<dbReference type="BRENDA" id="1.14.11.64">
    <property type="organism ID" value="5092"/>
</dbReference>
<dbReference type="Proteomes" id="UP000000556">
    <property type="component" value="Chromosome"/>
</dbReference>
<dbReference type="GO" id="GO:0008198">
    <property type="term" value="F:ferrous iron binding"/>
    <property type="evidence" value="ECO:0007669"/>
    <property type="project" value="UniProtKB-UniRule"/>
</dbReference>
<dbReference type="GO" id="GO:0106343">
    <property type="term" value="F:glutarate dioxygenase activity"/>
    <property type="evidence" value="ECO:0007669"/>
    <property type="project" value="UniProtKB-EC"/>
</dbReference>
<dbReference type="GO" id="GO:0050498">
    <property type="term" value="F:oxidoreductase activity, acting on paired donors, with incorporation or reduction of molecular oxygen, with 2-oxoglutarate as one donor, and the other dehydrogenated"/>
    <property type="evidence" value="ECO:0007669"/>
    <property type="project" value="UniProtKB-UniRule"/>
</dbReference>
<dbReference type="GO" id="GO:0019477">
    <property type="term" value="P:L-lysine catabolic process"/>
    <property type="evidence" value="ECO:0007669"/>
    <property type="project" value="UniProtKB-UniRule"/>
</dbReference>
<dbReference type="Gene3D" id="3.60.130.10">
    <property type="entry name" value="Clavaminate synthase-like"/>
    <property type="match status" value="1"/>
</dbReference>
<dbReference type="HAMAP" id="MF_01083">
    <property type="entry name" value="glutarate_hydroxylase"/>
    <property type="match status" value="1"/>
</dbReference>
<dbReference type="InterPro" id="IPR015038">
    <property type="entry name" value="GlaH"/>
</dbReference>
<dbReference type="InterPro" id="IPR042098">
    <property type="entry name" value="TauD-like_sf"/>
</dbReference>
<dbReference type="NCBIfam" id="NF002814">
    <property type="entry name" value="PRK02963.1"/>
    <property type="match status" value="1"/>
</dbReference>
<dbReference type="Pfam" id="PF08943">
    <property type="entry name" value="CsiD"/>
    <property type="match status" value="1"/>
</dbReference>
<dbReference type="SUPFAM" id="SSF51197">
    <property type="entry name" value="Clavaminate synthase-like"/>
    <property type="match status" value="1"/>
</dbReference>